<protein>
    <recommendedName>
        <fullName>Transcriptional regulatory protein GAT1</fullName>
    </recommendedName>
</protein>
<name>GAT1_YEAST</name>
<dbReference type="EMBL" id="U27344">
    <property type="protein sequence ID" value="AAB03516.1"/>
    <property type="molecule type" value="Genomic_DNA"/>
</dbReference>
<dbReference type="EMBL" id="D50617">
    <property type="protein sequence ID" value="BAA09217.1"/>
    <property type="molecule type" value="Genomic_DNA"/>
</dbReference>
<dbReference type="EMBL" id="BK006940">
    <property type="protein sequence ID" value="DAA12419.1"/>
    <property type="molecule type" value="Genomic_DNA"/>
</dbReference>
<dbReference type="PIR" id="S56233">
    <property type="entry name" value="S56233"/>
</dbReference>
<dbReference type="RefSeq" id="NP_116632.1">
    <property type="nucleotide sequence ID" value="NM_001179945.1"/>
</dbReference>
<dbReference type="SMR" id="P43574"/>
<dbReference type="BioGRID" id="31125">
    <property type="interactions" value="87"/>
</dbReference>
<dbReference type="DIP" id="DIP-4276N"/>
<dbReference type="FunCoup" id="P43574">
    <property type="interactions" value="2488"/>
</dbReference>
<dbReference type="IntAct" id="P43574">
    <property type="interactions" value="9"/>
</dbReference>
<dbReference type="MINT" id="P43574"/>
<dbReference type="STRING" id="4932.YFL021W"/>
<dbReference type="GlyGen" id="P43574">
    <property type="glycosylation" value="1 site"/>
</dbReference>
<dbReference type="iPTMnet" id="P43574"/>
<dbReference type="PaxDb" id="4932-YFL021W"/>
<dbReference type="PeptideAtlas" id="P43574"/>
<dbReference type="EnsemblFungi" id="YFL021W_mRNA">
    <property type="protein sequence ID" value="YFL021W"/>
    <property type="gene ID" value="YFL021W"/>
</dbReference>
<dbReference type="GeneID" id="850523"/>
<dbReference type="KEGG" id="sce:YFL021W"/>
<dbReference type="AGR" id="SGD:S000001873"/>
<dbReference type="SGD" id="S000001873">
    <property type="gene designation" value="GAT1"/>
</dbReference>
<dbReference type="VEuPathDB" id="FungiDB:YFL021W"/>
<dbReference type="eggNOG" id="KOG1601">
    <property type="taxonomic scope" value="Eukaryota"/>
</dbReference>
<dbReference type="HOGENOM" id="CLU_534434_0_0_1"/>
<dbReference type="InParanoid" id="P43574"/>
<dbReference type="OrthoDB" id="515401at2759"/>
<dbReference type="BioCyc" id="YEAST:G3O-30439-MONOMER"/>
<dbReference type="Reactome" id="R-SCE-9018519">
    <property type="pathway name" value="Estrogen-dependent gene expression"/>
</dbReference>
<dbReference type="BioGRID-ORCS" id="850523">
    <property type="hits" value="4 hits in 13 CRISPR screens"/>
</dbReference>
<dbReference type="PRO" id="PR:P43574"/>
<dbReference type="Proteomes" id="UP000002311">
    <property type="component" value="Chromosome VI"/>
</dbReference>
<dbReference type="RNAct" id="P43574">
    <property type="molecule type" value="protein"/>
</dbReference>
<dbReference type="GO" id="GO:0005737">
    <property type="term" value="C:cytoplasm"/>
    <property type="evidence" value="ECO:0000314"/>
    <property type="project" value="SGD"/>
</dbReference>
<dbReference type="GO" id="GO:0005634">
    <property type="term" value="C:nucleus"/>
    <property type="evidence" value="ECO:0000314"/>
    <property type="project" value="SGD"/>
</dbReference>
<dbReference type="GO" id="GO:0001228">
    <property type="term" value="F:DNA-binding transcription activator activity, RNA polymerase II-specific"/>
    <property type="evidence" value="ECO:0000315"/>
    <property type="project" value="SGD"/>
</dbReference>
<dbReference type="GO" id="GO:0000981">
    <property type="term" value="F:DNA-binding transcription factor activity, RNA polymerase II-specific"/>
    <property type="evidence" value="ECO:0000318"/>
    <property type="project" value="GO_Central"/>
</dbReference>
<dbReference type="GO" id="GO:0000978">
    <property type="term" value="F:RNA polymerase II cis-regulatory region sequence-specific DNA binding"/>
    <property type="evidence" value="ECO:0000318"/>
    <property type="project" value="GO_Central"/>
</dbReference>
<dbReference type="GO" id="GO:0043565">
    <property type="term" value="F:sequence-specific DNA binding"/>
    <property type="evidence" value="ECO:0000316"/>
    <property type="project" value="SGD"/>
</dbReference>
<dbReference type="GO" id="GO:0008270">
    <property type="term" value="F:zinc ion binding"/>
    <property type="evidence" value="ECO:0007669"/>
    <property type="project" value="UniProtKB-KW"/>
</dbReference>
<dbReference type="GO" id="GO:0000122">
    <property type="term" value="P:negative regulation of transcription by RNA polymerase II"/>
    <property type="evidence" value="ECO:0000318"/>
    <property type="project" value="GO_Central"/>
</dbReference>
<dbReference type="GO" id="GO:0045944">
    <property type="term" value="P:positive regulation of transcription by RNA polymerase II"/>
    <property type="evidence" value="ECO:0000315"/>
    <property type="project" value="SGD"/>
</dbReference>
<dbReference type="CDD" id="cd00202">
    <property type="entry name" value="ZnF_GATA"/>
    <property type="match status" value="1"/>
</dbReference>
<dbReference type="FunFam" id="3.30.50.10:FF:000007">
    <property type="entry name" value="Nitrogen regulatory AreA, N-terminal"/>
    <property type="match status" value="1"/>
</dbReference>
<dbReference type="Gene3D" id="3.30.50.10">
    <property type="entry name" value="Erythroid Transcription Factor GATA-1, subunit A"/>
    <property type="match status" value="1"/>
</dbReference>
<dbReference type="InterPro" id="IPR013860">
    <property type="entry name" value="AreA_GATA"/>
</dbReference>
<dbReference type="InterPro" id="IPR039355">
    <property type="entry name" value="Transcription_factor_GATA"/>
</dbReference>
<dbReference type="InterPro" id="IPR000679">
    <property type="entry name" value="Znf_GATA"/>
</dbReference>
<dbReference type="InterPro" id="IPR013088">
    <property type="entry name" value="Znf_NHR/GATA"/>
</dbReference>
<dbReference type="PANTHER" id="PTHR10071:SF281">
    <property type="entry name" value="BOX A-BINDING FACTOR-RELATED"/>
    <property type="match status" value="1"/>
</dbReference>
<dbReference type="PANTHER" id="PTHR10071">
    <property type="entry name" value="TRANSCRIPTION FACTOR GATA FAMILY MEMBER"/>
    <property type="match status" value="1"/>
</dbReference>
<dbReference type="Pfam" id="PF00320">
    <property type="entry name" value="GATA"/>
    <property type="match status" value="1"/>
</dbReference>
<dbReference type="Pfam" id="PF08550">
    <property type="entry name" value="GATA_AreA"/>
    <property type="match status" value="1"/>
</dbReference>
<dbReference type="PRINTS" id="PR00619">
    <property type="entry name" value="GATAZNFINGER"/>
</dbReference>
<dbReference type="SMART" id="SM00401">
    <property type="entry name" value="ZnF_GATA"/>
    <property type="match status" value="1"/>
</dbReference>
<dbReference type="SUPFAM" id="SSF57716">
    <property type="entry name" value="Glucocorticoid receptor-like (DNA-binding domain)"/>
    <property type="match status" value="1"/>
</dbReference>
<dbReference type="PROSITE" id="PS00344">
    <property type="entry name" value="GATA_ZN_FINGER_1"/>
    <property type="match status" value="1"/>
</dbReference>
<dbReference type="PROSITE" id="PS50114">
    <property type="entry name" value="GATA_ZN_FINGER_2"/>
    <property type="match status" value="1"/>
</dbReference>
<reference key="1">
    <citation type="journal article" date="1996" name="Mol. Cell. Biol.">
        <title>Gat1p, a GATA family protein whose production is sensitive to nitrogen catabolite repression, participates in transcriptional activation of nitrogen-catabolic genes in Saccharomyces cerevisiae.</title>
        <authorList>
            <person name="Coffman J.A."/>
            <person name="Rai R."/>
            <person name="Cunningham T."/>
            <person name="Svetlov V."/>
            <person name="Cooper T.G."/>
        </authorList>
    </citation>
    <scope>NUCLEOTIDE SEQUENCE [GENOMIC DNA]</scope>
    <source>
        <strain>S288c / GRF88</strain>
    </source>
</reference>
<reference key="2">
    <citation type="journal article" date="1995" name="Nat. Genet.">
        <title>Analysis of the nucleotide sequence of chromosome VI from Saccharomyces cerevisiae.</title>
        <authorList>
            <person name="Murakami Y."/>
            <person name="Naitou M."/>
            <person name="Hagiwara H."/>
            <person name="Shibata T."/>
            <person name="Ozawa M."/>
            <person name="Sasanuma S."/>
            <person name="Sasanuma M."/>
            <person name="Tsuchiya Y."/>
            <person name="Soeda E."/>
            <person name="Yokoyama K."/>
            <person name="Yamazaki M."/>
            <person name="Tashiro H."/>
            <person name="Eki T."/>
        </authorList>
    </citation>
    <scope>NUCLEOTIDE SEQUENCE [LARGE SCALE GENOMIC DNA]</scope>
    <source>
        <strain>ATCC 204508 / S288c</strain>
    </source>
</reference>
<reference key="3">
    <citation type="journal article" date="2014" name="G3 (Bethesda)">
        <title>The reference genome sequence of Saccharomyces cerevisiae: Then and now.</title>
        <authorList>
            <person name="Engel S.R."/>
            <person name="Dietrich F.S."/>
            <person name="Fisk D.G."/>
            <person name="Binkley G."/>
            <person name="Balakrishnan R."/>
            <person name="Costanzo M.C."/>
            <person name="Dwight S.S."/>
            <person name="Hitz B.C."/>
            <person name="Karra K."/>
            <person name="Nash R.S."/>
            <person name="Weng S."/>
            <person name="Wong E.D."/>
            <person name="Lloyd P."/>
            <person name="Skrzypek M.S."/>
            <person name="Miyasato S.R."/>
            <person name="Simison M."/>
            <person name="Cherry J.M."/>
        </authorList>
    </citation>
    <scope>GENOME REANNOTATION</scope>
    <source>
        <strain>ATCC 204508 / S288c</strain>
    </source>
</reference>
<reference key="4">
    <citation type="journal article" date="2003" name="Nature">
        <title>Global analysis of protein expression in yeast.</title>
        <authorList>
            <person name="Ghaemmaghami S."/>
            <person name="Huh W.-K."/>
            <person name="Bower K."/>
            <person name="Howson R.W."/>
            <person name="Belle A."/>
            <person name="Dephoure N."/>
            <person name="O'Shea E.K."/>
            <person name="Weissman J.S."/>
        </authorList>
    </citation>
    <scope>LEVEL OF PROTEIN EXPRESSION [LARGE SCALE ANALYSIS]</scope>
</reference>
<reference key="5">
    <citation type="journal article" date="2007" name="J. Proteome Res.">
        <title>Large-scale phosphorylation analysis of alpha-factor-arrested Saccharomyces cerevisiae.</title>
        <authorList>
            <person name="Li X."/>
            <person name="Gerber S.A."/>
            <person name="Rudner A.D."/>
            <person name="Beausoleil S.A."/>
            <person name="Haas W."/>
            <person name="Villen J."/>
            <person name="Elias J.E."/>
            <person name="Gygi S.P."/>
        </authorList>
    </citation>
    <scope>PHOSPHORYLATION [LARGE SCALE ANALYSIS] AT SER-270; SER-399 AND SER-418</scope>
    <scope>IDENTIFICATION BY MASS SPECTROMETRY [LARGE SCALE ANALYSIS]</scope>
    <source>
        <strain>ADR376</strain>
    </source>
</reference>
<reference key="6">
    <citation type="journal article" date="2008" name="Mol. Cell. Proteomics">
        <title>A multidimensional chromatography technology for in-depth phosphoproteome analysis.</title>
        <authorList>
            <person name="Albuquerque C.P."/>
            <person name="Smolka M.B."/>
            <person name="Payne S.H."/>
            <person name="Bafna V."/>
            <person name="Eng J."/>
            <person name="Zhou H."/>
        </authorList>
    </citation>
    <scope>PHOSPHORYLATION [LARGE SCALE ANALYSIS] AT SER-167; SER-262 AND SER-418</scope>
    <scope>IDENTIFICATION BY MASS SPECTROMETRY [LARGE SCALE ANALYSIS]</scope>
</reference>
<reference key="7">
    <citation type="journal article" date="2009" name="Science">
        <title>Global analysis of Cdk1 substrate phosphorylation sites provides insights into evolution.</title>
        <authorList>
            <person name="Holt L.J."/>
            <person name="Tuch B.B."/>
            <person name="Villen J."/>
            <person name="Johnson A.D."/>
            <person name="Gygi S.P."/>
            <person name="Morgan D.O."/>
        </authorList>
    </citation>
    <scope>PHOSPHORYLATION [LARGE SCALE ANALYSIS] AT SER-262; SER-270; THR-369 AND SER-399</scope>
    <scope>IDENTIFICATION BY MASS SPECTROMETRY [LARGE SCALE ANALYSIS]</scope>
</reference>
<feature type="chain" id="PRO_0000083484" description="Transcriptional regulatory protein GAT1">
    <location>
        <begin position="1"/>
        <end position="510"/>
    </location>
</feature>
<feature type="zinc finger region" description="GATA-type" evidence="1">
    <location>
        <begin position="310"/>
        <end position="334"/>
    </location>
</feature>
<feature type="region of interest" description="Disordered" evidence="2">
    <location>
        <begin position="220"/>
        <end position="311"/>
    </location>
</feature>
<feature type="region of interest" description="Disordered" evidence="2">
    <location>
        <begin position="358"/>
        <end position="383"/>
    </location>
</feature>
<feature type="compositionally biased region" description="Low complexity" evidence="2">
    <location>
        <begin position="220"/>
        <end position="256"/>
    </location>
</feature>
<feature type="compositionally biased region" description="Basic residues" evidence="2">
    <location>
        <begin position="274"/>
        <end position="287"/>
    </location>
</feature>
<feature type="compositionally biased region" description="Low complexity" evidence="2">
    <location>
        <begin position="294"/>
        <end position="306"/>
    </location>
</feature>
<feature type="modified residue" description="Phosphoserine" evidence="6">
    <location>
        <position position="167"/>
    </location>
</feature>
<feature type="modified residue" description="Phosphoserine" evidence="6 7">
    <location>
        <position position="262"/>
    </location>
</feature>
<feature type="modified residue" description="Phosphoserine" evidence="5 7">
    <location>
        <position position="270"/>
    </location>
</feature>
<feature type="modified residue" description="Phosphothreonine" evidence="7">
    <location>
        <position position="369"/>
    </location>
</feature>
<feature type="modified residue" description="Phosphoserine" evidence="5 7">
    <location>
        <position position="399"/>
    </location>
</feature>
<feature type="modified residue" description="Phosphoserine" evidence="5 6">
    <location>
        <position position="418"/>
    </location>
</feature>
<organism>
    <name type="scientific">Saccharomyces cerevisiae (strain ATCC 204508 / S288c)</name>
    <name type="common">Baker's yeast</name>
    <dbReference type="NCBI Taxonomy" id="559292"/>
    <lineage>
        <taxon>Eukaryota</taxon>
        <taxon>Fungi</taxon>
        <taxon>Dikarya</taxon>
        <taxon>Ascomycota</taxon>
        <taxon>Saccharomycotina</taxon>
        <taxon>Saccharomycetes</taxon>
        <taxon>Saccharomycetales</taxon>
        <taxon>Saccharomycetaceae</taxon>
        <taxon>Saccharomyces</taxon>
    </lineage>
</organism>
<evidence type="ECO:0000255" key="1">
    <source>
        <dbReference type="PROSITE-ProRule" id="PRU00094"/>
    </source>
</evidence>
<evidence type="ECO:0000256" key="2">
    <source>
        <dbReference type="SAM" id="MobiDB-lite"/>
    </source>
</evidence>
<evidence type="ECO:0000269" key="3">
    <source>
    </source>
</evidence>
<evidence type="ECO:0000305" key="4"/>
<evidence type="ECO:0007744" key="5">
    <source>
    </source>
</evidence>
<evidence type="ECO:0007744" key="6">
    <source>
    </source>
</evidence>
<evidence type="ECO:0007744" key="7">
    <source>
    </source>
</evidence>
<keyword id="KW-0238">DNA-binding</keyword>
<keyword id="KW-0479">Metal-binding</keyword>
<keyword id="KW-0539">Nucleus</keyword>
<keyword id="KW-0597">Phosphoprotein</keyword>
<keyword id="KW-1185">Reference proteome</keyword>
<keyword id="KW-0804">Transcription</keyword>
<keyword id="KW-0805">Transcription regulation</keyword>
<keyword id="KW-0862">Zinc</keyword>
<keyword id="KW-0863">Zinc-finger</keyword>
<accession>P43574</accession>
<accession>D6VTK9</accession>
<comment type="function">
    <text>Positive regulator of multiple nitrogen catabolic genes.</text>
</comment>
<comment type="subcellular location">
    <subcellularLocation>
        <location evidence="4">Nucleus</location>
    </subcellularLocation>
</comment>
<comment type="miscellaneous">
    <text evidence="3">Present with 1180 molecules/cell in log phase SD medium.</text>
</comment>
<sequence length="510" mass="56328">MHVFFPLLFRPSPVLFIACAYIYIDIYIHCTRCTVVNITMSTNRVPNLDPDLNLNKEIWDLYSSAQKILPDSNRILNLSWRLHNRTSFHRINRIMQHSNSIMDFSASPFASGVNAAGPGNNDLDDTDTDNQQFFLSDMNLNGSSVFENVFDDDDDDDDVETHSIVHSDLLNDMDSASQRASHNASGFPNFLDTSCSSSFDDHFIFTNNLPFLNNNSINNNHSHNSSHNNNSPSIANNTNANTNTNTSASTNTNSPLLRRNPSPSIVKPGSRRNSSVRKKKPALKKIKSSTSVQSSATPPSNTSSNPDIKCSNCTTSTTPLWRKDPKGLPLCNACGLFLKLHGVTRPLSLKTDIIKKRQRSSTKINNNITPPPSSSLNPGAAGKKKNYTASVAASKRKNSLNIVAPLKSQDIPIPKIASPSIPQYLRSNTRHHLSSSVPIEAETFSSFRPDMNMTMNMNLHNASTSSFNNEAFWKPLDSAIDHHSGDTNPNSNMNTTPNGNLSLDWLNLNL</sequence>
<proteinExistence type="evidence at protein level"/>
<gene>
    <name type="primary">GAT1</name>
    <name type="ordered locus">YFL021W</name>
</gene>